<keyword id="KW-0963">Cytoplasm</keyword>
<keyword id="KW-0396">Initiation factor</keyword>
<keyword id="KW-0539">Nucleus</keyword>
<keyword id="KW-0597">Phosphoprotein</keyword>
<keyword id="KW-0648">Protein biosynthesis</keyword>
<keyword id="KW-1185">Reference proteome</keyword>
<keyword id="KW-0694">RNA-binding</keyword>
<protein>
    <recommendedName>
        <fullName evidence="2">Eukaryotic translation initiation factor 3 subunit G</fullName>
        <shortName evidence="2">eIF3g</shortName>
    </recommendedName>
    <alternativeName>
        <fullName evidence="2">Eukaryotic translation initiation factor 3 RNA-binding subunit</fullName>
        <shortName evidence="2">eIF-3 RNA-binding subunit</shortName>
    </alternativeName>
    <alternativeName>
        <fullName evidence="2">Eukaryotic translation initiation factor 3 subunit 4</fullName>
    </alternativeName>
    <alternativeName>
        <fullName evidence="2">eIF-3-delta</fullName>
    </alternativeName>
    <alternativeName>
        <fullName evidence="2">eIF3 p42</fullName>
    </alternativeName>
    <alternativeName>
        <fullName evidence="2">eIF3 p44</fullName>
    </alternativeName>
</protein>
<dbReference type="EMBL" id="BC102984">
    <property type="protein sequence ID" value="AAI02985.1"/>
    <property type="molecule type" value="mRNA"/>
</dbReference>
<dbReference type="RefSeq" id="NP_001073091.1">
    <property type="nucleotide sequence ID" value="NM_001079623.2"/>
</dbReference>
<dbReference type="BMRB" id="Q3ZC12"/>
<dbReference type="SMR" id="Q3ZC12"/>
<dbReference type="FunCoup" id="Q3ZC12">
    <property type="interactions" value="2453"/>
</dbReference>
<dbReference type="STRING" id="9913.ENSBTAP00000003545"/>
<dbReference type="PaxDb" id="9913-ENSBTAP00000003545"/>
<dbReference type="PeptideAtlas" id="Q3ZC12"/>
<dbReference type="GeneID" id="615695"/>
<dbReference type="KEGG" id="bta:615695"/>
<dbReference type="CTD" id="8666"/>
<dbReference type="eggNOG" id="KOG0122">
    <property type="taxonomic scope" value="Eukaryota"/>
</dbReference>
<dbReference type="InParanoid" id="Q3ZC12"/>
<dbReference type="OrthoDB" id="1749473at2759"/>
<dbReference type="Proteomes" id="UP000009136">
    <property type="component" value="Unplaced"/>
</dbReference>
<dbReference type="GO" id="GO:0016282">
    <property type="term" value="C:eukaryotic 43S preinitiation complex"/>
    <property type="evidence" value="ECO:0007669"/>
    <property type="project" value="UniProtKB-UniRule"/>
</dbReference>
<dbReference type="GO" id="GO:0033290">
    <property type="term" value="C:eukaryotic 48S preinitiation complex"/>
    <property type="evidence" value="ECO:0007669"/>
    <property type="project" value="UniProtKB-UniRule"/>
</dbReference>
<dbReference type="GO" id="GO:0005852">
    <property type="term" value="C:eukaryotic translation initiation factor 3 complex"/>
    <property type="evidence" value="ECO:0000250"/>
    <property type="project" value="UniProtKB"/>
</dbReference>
<dbReference type="GO" id="GO:0005634">
    <property type="term" value="C:nucleus"/>
    <property type="evidence" value="ECO:0007669"/>
    <property type="project" value="UniProtKB-SubCell"/>
</dbReference>
<dbReference type="GO" id="GO:0048471">
    <property type="term" value="C:perinuclear region of cytoplasm"/>
    <property type="evidence" value="ECO:0007669"/>
    <property type="project" value="UniProtKB-SubCell"/>
</dbReference>
<dbReference type="GO" id="GO:0003723">
    <property type="term" value="F:RNA binding"/>
    <property type="evidence" value="ECO:0007669"/>
    <property type="project" value="UniProtKB-UniRule"/>
</dbReference>
<dbReference type="GO" id="GO:0003743">
    <property type="term" value="F:translation initiation factor activity"/>
    <property type="evidence" value="ECO:0007669"/>
    <property type="project" value="UniProtKB-UniRule"/>
</dbReference>
<dbReference type="GO" id="GO:0001732">
    <property type="term" value="P:formation of cytoplasmic translation initiation complex"/>
    <property type="evidence" value="ECO:0007669"/>
    <property type="project" value="UniProtKB-UniRule"/>
</dbReference>
<dbReference type="GO" id="GO:0006413">
    <property type="term" value="P:translational initiation"/>
    <property type="evidence" value="ECO:0000250"/>
    <property type="project" value="UniProtKB"/>
</dbReference>
<dbReference type="CDD" id="cd12933">
    <property type="entry name" value="eIF3G"/>
    <property type="match status" value="1"/>
</dbReference>
<dbReference type="CDD" id="cd12408">
    <property type="entry name" value="RRM_eIF3G_like"/>
    <property type="match status" value="1"/>
</dbReference>
<dbReference type="FunFam" id="3.30.70.330:FF:000194">
    <property type="entry name" value="Eukaryotic translation initiation factor 3 subunit G"/>
    <property type="match status" value="1"/>
</dbReference>
<dbReference type="Gene3D" id="3.30.70.330">
    <property type="match status" value="1"/>
</dbReference>
<dbReference type="HAMAP" id="MF_03006">
    <property type="entry name" value="eIF3g"/>
    <property type="match status" value="1"/>
</dbReference>
<dbReference type="InterPro" id="IPR017334">
    <property type="entry name" value="eIF3_g"/>
</dbReference>
<dbReference type="InterPro" id="IPR024675">
    <property type="entry name" value="eIF3g_N"/>
</dbReference>
<dbReference type="InterPro" id="IPR034240">
    <property type="entry name" value="eIF3G_RRM"/>
</dbReference>
<dbReference type="InterPro" id="IPR012677">
    <property type="entry name" value="Nucleotide-bd_a/b_plait_sf"/>
</dbReference>
<dbReference type="InterPro" id="IPR035979">
    <property type="entry name" value="RBD_domain_sf"/>
</dbReference>
<dbReference type="InterPro" id="IPR000504">
    <property type="entry name" value="RRM_dom"/>
</dbReference>
<dbReference type="PANTHER" id="PTHR10352">
    <property type="entry name" value="EUKARYOTIC TRANSLATION INITIATION FACTOR 3 SUBUNIT G"/>
    <property type="match status" value="1"/>
</dbReference>
<dbReference type="Pfam" id="PF12353">
    <property type="entry name" value="eIF3g"/>
    <property type="match status" value="1"/>
</dbReference>
<dbReference type="Pfam" id="PF00076">
    <property type="entry name" value="RRM_1"/>
    <property type="match status" value="1"/>
</dbReference>
<dbReference type="PIRSF" id="PIRSF037949">
    <property type="entry name" value="Transl_init_eIF-3_RNA-bind"/>
    <property type="match status" value="1"/>
</dbReference>
<dbReference type="SMART" id="SM00360">
    <property type="entry name" value="RRM"/>
    <property type="match status" value="1"/>
</dbReference>
<dbReference type="SUPFAM" id="SSF54928">
    <property type="entry name" value="RNA-binding domain, RBD"/>
    <property type="match status" value="1"/>
</dbReference>
<dbReference type="PROSITE" id="PS50102">
    <property type="entry name" value="RRM"/>
    <property type="match status" value="1"/>
</dbReference>
<reference key="1">
    <citation type="submission" date="2005-08" db="EMBL/GenBank/DDBJ databases">
        <authorList>
            <consortium name="NIH - Mammalian Gene Collection (MGC) project"/>
        </authorList>
    </citation>
    <scope>NUCLEOTIDE SEQUENCE [LARGE SCALE MRNA]</scope>
    <source>
        <strain>Hereford</strain>
        <tissue>Heart ventricle</tissue>
    </source>
</reference>
<accession>Q3ZC12</accession>
<gene>
    <name evidence="2" type="primary">EIF3G</name>
    <name evidence="2" type="synonym">EIF3S4</name>
</gene>
<evidence type="ECO:0000250" key="1">
    <source>
        <dbReference type="UniProtKB" id="O75821"/>
    </source>
</evidence>
<evidence type="ECO:0000255" key="2">
    <source>
        <dbReference type="HAMAP-Rule" id="MF_03006"/>
    </source>
</evidence>
<evidence type="ECO:0000256" key="3">
    <source>
        <dbReference type="SAM" id="MobiDB-lite"/>
    </source>
</evidence>
<organism>
    <name type="scientific">Bos taurus</name>
    <name type="common">Bovine</name>
    <dbReference type="NCBI Taxonomy" id="9913"/>
    <lineage>
        <taxon>Eukaryota</taxon>
        <taxon>Metazoa</taxon>
        <taxon>Chordata</taxon>
        <taxon>Craniata</taxon>
        <taxon>Vertebrata</taxon>
        <taxon>Euteleostomi</taxon>
        <taxon>Mammalia</taxon>
        <taxon>Eutheria</taxon>
        <taxon>Laurasiatheria</taxon>
        <taxon>Artiodactyla</taxon>
        <taxon>Ruminantia</taxon>
        <taxon>Pecora</taxon>
        <taxon>Bovidae</taxon>
        <taxon>Bovinae</taxon>
        <taxon>Bos</taxon>
    </lineage>
</organism>
<sequence length="320" mass="35655">MPTGDFDSKPSWADQVEEEGEDDKCVTSELLKGIPLATGDTSLEPELLPGAPLPPPKEVINGNIKTVTEYRIDEDGKKFKIVRTFRIETRKASKAVARRKNWKKFGNSEFDPPGPNVATTTVSDDVSMTFITSKEDLNCQEEEDPMNKLKGQKIVSCRICKGDHWTTRCPYKDTLGPMQKELAEQLGLSTGEKEKLPGELEPVQATQNKTGKYVPPSLRDGASRRGESMQPNRRADDNATIRVTNLSEDTRETDLQELFRPFGSISRIYLAKDKTTGQSKGFAFISFHRREDAARAIAGVSGFGYDHLILNVEWAKPSTN</sequence>
<name>EIF3G_BOVIN</name>
<feature type="chain" id="PRO_0000246085" description="Eukaryotic translation initiation factor 3 subunit G">
    <location>
        <begin position="1"/>
        <end position="320"/>
    </location>
</feature>
<feature type="domain" description="RRM" evidence="2">
    <location>
        <begin position="239"/>
        <end position="317"/>
    </location>
</feature>
<feature type="region of interest" description="Disordered" evidence="3">
    <location>
        <begin position="1"/>
        <end position="25"/>
    </location>
</feature>
<feature type="region of interest" description="Disordered" evidence="3">
    <location>
        <begin position="209"/>
        <end position="234"/>
    </location>
</feature>
<feature type="compositionally biased region" description="Basic and acidic residues" evidence="3">
    <location>
        <begin position="221"/>
        <end position="234"/>
    </location>
</feature>
<feature type="modified residue" description="Phosphoserine" evidence="1">
    <location>
        <position position="8"/>
    </location>
</feature>
<feature type="modified residue" description="Phosphoserine" evidence="1">
    <location>
        <position position="11"/>
    </location>
</feature>
<feature type="modified residue" description="Phosphothreonine" evidence="1 2">
    <location>
        <position position="38"/>
    </location>
</feature>
<feature type="modified residue" description="Phosphothreonine" evidence="1 2">
    <location>
        <position position="41"/>
    </location>
</feature>
<feature type="modified residue" description="Phosphoserine" evidence="1 2">
    <location>
        <position position="42"/>
    </location>
</feature>
<feature type="modified residue" description="Phosphoserine" evidence="1">
    <location>
        <position position="189"/>
    </location>
</feature>
<feature type="modified residue" description="Phosphoserine" evidence="1">
    <location>
        <position position="223"/>
    </location>
</feature>
<feature type="modified residue" description="Phosphoserine" evidence="1">
    <location>
        <position position="264"/>
    </location>
</feature>
<proteinExistence type="evidence at transcript level"/>
<comment type="function">
    <text evidence="2">RNA-binding component of the eukaryotic translation initiation factor 3 (eIF-3) complex, which is required for several steps in the initiation of protein synthesis. The eIF-3 complex associates with the 40S ribosome and facilitates the recruitment of eIF-1, eIF-1A, eIF-2:GTP:methionyl-tRNAi and eIF-5 to form the 43S pre-initiation complex (43S PIC). The eIF-3 complex stimulates mRNA recruitment to the 43S PIC and scanning of the mRNA for AUG recognition. The eIF-3 complex is also required for disassembly and recycling of post-termination ribosomal complexes and subsequently prevents premature joining of the 40S and 60S ribosomal subunits prior to initiation. The eIF-3 complex specifically targets and initiates translation of a subset of mRNAs involved in cell proliferation, including cell cycling, differentiation and apoptosis, and uses different modes of RNA stem-loop binding to exert either translational activation or repression. This subunit can bind 18S rRNA.</text>
</comment>
<comment type="subunit">
    <text evidence="1 2">Component of the eukaryotic translation initiation factor 3 (eIF-3) complex, which is composed of 13 subunits: EIF3A, EIF3B, EIF3C, EIF3D, EIF3E, EIF3F, EIF3G, EIF3H, EIF3I, EIF3J, EIF3K, EIF3L and EIF3M. The eIF-3 complex appears to include 3 stable modules: module A is composed of EIF3A, EIF3B, EIF3G and EIF3I; module B is composed of EIF3F, EIF3H, and EIF3M; and module C is composed of EIF3C, EIF3D, EIF3E, EIF3K and EIF3L. EIF3C of module C binds EIF3B of module A and EIF3H of module B, thereby linking the three modules. EIF3J is a labile subunit that binds to the eIF-3 complex via EIF3B. The eIF-3 complex interacts with RPS6KB1 under conditions of nutrient depletion. Mitogenic stimulation leads to binding and activation of a complex composed of FRAP1 and RAPTOR, leading to phosphorylation and release of RPS6KB1 and binding of EIF4B to eIF-3. Interacts (via C-terminus) with AIFM1 (via N-terminus). Interacts with DHX33; the interaction is independent of RNA (By similarity).</text>
</comment>
<comment type="subcellular location">
    <subcellularLocation>
        <location evidence="2">Cytoplasm</location>
    </subcellularLocation>
    <subcellularLocation>
        <location evidence="2">Nucleus</location>
    </subcellularLocation>
    <subcellularLocation>
        <location evidence="2">Cytoplasm</location>
        <location evidence="2">Perinuclear region</location>
    </subcellularLocation>
    <text evidence="2">Colocalizes with AIFM1 in the nucleus and perinuclear region.</text>
</comment>
<comment type="PTM">
    <text evidence="2">Phosphorylated. Phosphorylation is enhanced upon serum stimulation.</text>
</comment>
<comment type="similarity">
    <text evidence="2">Belongs to the eIF-3 subunit G family.</text>
</comment>